<feature type="chain" id="PRO_1000018688" description="Phosphoribosylaminoimidazole-succinocarboxamide synthase">
    <location>
        <begin position="1"/>
        <end position="237"/>
    </location>
</feature>
<name>PUR7_CITK8</name>
<sequence length="237" mass="26957">MQKQAELYRGKAKTVYSTENPDLLVLEFRNDTSAGDGARIEQFDRKGMVNNKFNHFIMTKLAEAGIPTQMEQLLSDTECLVKKLDMVPVECVVRNRAAGSLVKRLGIEEGIELNPPLFDLFLKNDAMHDPMVNDSYCETFGWVSKENLARMKELTYKANDVLKKLFDDAGLILVDFKLEFGLYKGEVVLGDEFSPDGSRLWDKETLDKMDKDRFRQSLGGLIEAYETVARRLGVQLD</sequence>
<gene>
    <name evidence="1" type="primary">purC</name>
    <name type="ordered locus">CKO_00311</name>
</gene>
<proteinExistence type="inferred from homology"/>
<protein>
    <recommendedName>
        <fullName evidence="1">Phosphoribosylaminoimidazole-succinocarboxamide synthase</fullName>
        <ecNumber evidence="1">6.3.2.6</ecNumber>
    </recommendedName>
    <alternativeName>
        <fullName evidence="1">SAICAR synthetase</fullName>
    </alternativeName>
</protein>
<dbReference type="EC" id="6.3.2.6" evidence="1"/>
<dbReference type="EMBL" id="CP000822">
    <property type="protein sequence ID" value="ABV11474.1"/>
    <property type="molecule type" value="Genomic_DNA"/>
</dbReference>
<dbReference type="RefSeq" id="WP_012131304.1">
    <property type="nucleotide sequence ID" value="NC_009792.1"/>
</dbReference>
<dbReference type="SMR" id="A8ADB1"/>
<dbReference type="STRING" id="290338.CKO_00311"/>
<dbReference type="GeneID" id="45134586"/>
<dbReference type="KEGG" id="cko:CKO_00311"/>
<dbReference type="HOGENOM" id="CLU_061495_2_1_6"/>
<dbReference type="OrthoDB" id="9801549at2"/>
<dbReference type="UniPathway" id="UPA00074">
    <property type="reaction ID" value="UER00131"/>
</dbReference>
<dbReference type="Proteomes" id="UP000008148">
    <property type="component" value="Chromosome"/>
</dbReference>
<dbReference type="GO" id="GO:0005829">
    <property type="term" value="C:cytosol"/>
    <property type="evidence" value="ECO:0007669"/>
    <property type="project" value="TreeGrafter"/>
</dbReference>
<dbReference type="GO" id="GO:0005524">
    <property type="term" value="F:ATP binding"/>
    <property type="evidence" value="ECO:0007669"/>
    <property type="project" value="UniProtKB-KW"/>
</dbReference>
<dbReference type="GO" id="GO:0004639">
    <property type="term" value="F:phosphoribosylaminoimidazolesuccinocarboxamide synthase activity"/>
    <property type="evidence" value="ECO:0007669"/>
    <property type="project" value="UniProtKB-UniRule"/>
</dbReference>
<dbReference type="GO" id="GO:0006189">
    <property type="term" value="P:'de novo' IMP biosynthetic process"/>
    <property type="evidence" value="ECO:0007669"/>
    <property type="project" value="UniProtKB-UniRule"/>
</dbReference>
<dbReference type="GO" id="GO:0009236">
    <property type="term" value="P:cobalamin biosynthetic process"/>
    <property type="evidence" value="ECO:0007669"/>
    <property type="project" value="InterPro"/>
</dbReference>
<dbReference type="CDD" id="cd01415">
    <property type="entry name" value="SAICAR_synt_PurC"/>
    <property type="match status" value="1"/>
</dbReference>
<dbReference type="FunFam" id="3.30.200.20:FF:000086">
    <property type="entry name" value="Phosphoribosylaminoimidazole-succinocarboxamide synthase"/>
    <property type="match status" value="1"/>
</dbReference>
<dbReference type="FunFam" id="3.30.470.20:FF:000006">
    <property type="entry name" value="Phosphoribosylaminoimidazole-succinocarboxamide synthase"/>
    <property type="match status" value="1"/>
</dbReference>
<dbReference type="Gene3D" id="3.30.470.20">
    <property type="entry name" value="ATP-grasp fold, B domain"/>
    <property type="match status" value="1"/>
</dbReference>
<dbReference type="Gene3D" id="3.30.200.20">
    <property type="entry name" value="Phosphorylase Kinase, domain 1"/>
    <property type="match status" value="1"/>
</dbReference>
<dbReference type="HAMAP" id="MF_00137">
    <property type="entry name" value="SAICAR_synth"/>
    <property type="match status" value="1"/>
</dbReference>
<dbReference type="InterPro" id="IPR028923">
    <property type="entry name" value="SAICAR_synt/ADE2_N"/>
</dbReference>
<dbReference type="InterPro" id="IPR033934">
    <property type="entry name" value="SAICAR_synt_PurC"/>
</dbReference>
<dbReference type="InterPro" id="IPR001636">
    <property type="entry name" value="SAICAR_synth"/>
</dbReference>
<dbReference type="InterPro" id="IPR050089">
    <property type="entry name" value="SAICAR_synthetase"/>
</dbReference>
<dbReference type="InterPro" id="IPR018236">
    <property type="entry name" value="SAICAR_synthetase_CS"/>
</dbReference>
<dbReference type="NCBIfam" id="TIGR00081">
    <property type="entry name" value="purC"/>
    <property type="match status" value="1"/>
</dbReference>
<dbReference type="PANTHER" id="PTHR43599">
    <property type="entry name" value="MULTIFUNCTIONAL PROTEIN ADE2"/>
    <property type="match status" value="1"/>
</dbReference>
<dbReference type="PANTHER" id="PTHR43599:SF3">
    <property type="entry name" value="SI:DKEY-6E2.2"/>
    <property type="match status" value="1"/>
</dbReference>
<dbReference type="Pfam" id="PF01259">
    <property type="entry name" value="SAICAR_synt"/>
    <property type="match status" value="1"/>
</dbReference>
<dbReference type="SUPFAM" id="SSF56104">
    <property type="entry name" value="SAICAR synthase-like"/>
    <property type="match status" value="1"/>
</dbReference>
<dbReference type="PROSITE" id="PS01057">
    <property type="entry name" value="SAICAR_SYNTHETASE_1"/>
    <property type="match status" value="1"/>
</dbReference>
<dbReference type="PROSITE" id="PS01058">
    <property type="entry name" value="SAICAR_SYNTHETASE_2"/>
    <property type="match status" value="1"/>
</dbReference>
<evidence type="ECO:0000255" key="1">
    <source>
        <dbReference type="HAMAP-Rule" id="MF_00137"/>
    </source>
</evidence>
<keyword id="KW-0067">ATP-binding</keyword>
<keyword id="KW-0436">Ligase</keyword>
<keyword id="KW-0547">Nucleotide-binding</keyword>
<keyword id="KW-0658">Purine biosynthesis</keyword>
<keyword id="KW-1185">Reference proteome</keyword>
<accession>A8ADB1</accession>
<comment type="catalytic activity">
    <reaction evidence="1">
        <text>5-amino-1-(5-phospho-D-ribosyl)imidazole-4-carboxylate + L-aspartate + ATP = (2S)-2-[5-amino-1-(5-phospho-beta-D-ribosyl)imidazole-4-carboxamido]succinate + ADP + phosphate + 2 H(+)</text>
        <dbReference type="Rhea" id="RHEA:22628"/>
        <dbReference type="ChEBI" id="CHEBI:15378"/>
        <dbReference type="ChEBI" id="CHEBI:29991"/>
        <dbReference type="ChEBI" id="CHEBI:30616"/>
        <dbReference type="ChEBI" id="CHEBI:43474"/>
        <dbReference type="ChEBI" id="CHEBI:58443"/>
        <dbReference type="ChEBI" id="CHEBI:77657"/>
        <dbReference type="ChEBI" id="CHEBI:456216"/>
        <dbReference type="EC" id="6.3.2.6"/>
    </reaction>
</comment>
<comment type="pathway">
    <text evidence="1">Purine metabolism; IMP biosynthesis via de novo pathway; 5-amino-1-(5-phospho-D-ribosyl)imidazole-4-carboxamide from 5-amino-1-(5-phospho-D-ribosyl)imidazole-4-carboxylate: step 1/2.</text>
</comment>
<comment type="similarity">
    <text evidence="1">Belongs to the SAICAR synthetase family.</text>
</comment>
<reference key="1">
    <citation type="submission" date="2007-08" db="EMBL/GenBank/DDBJ databases">
        <authorList>
            <consortium name="The Citrobacter koseri Genome Sequencing Project"/>
            <person name="McClelland M."/>
            <person name="Sanderson E.K."/>
            <person name="Porwollik S."/>
            <person name="Spieth J."/>
            <person name="Clifton W.S."/>
            <person name="Latreille P."/>
            <person name="Courtney L."/>
            <person name="Wang C."/>
            <person name="Pepin K."/>
            <person name="Bhonagiri V."/>
            <person name="Nash W."/>
            <person name="Johnson M."/>
            <person name="Thiruvilangam P."/>
            <person name="Wilson R."/>
        </authorList>
    </citation>
    <scope>NUCLEOTIDE SEQUENCE [LARGE SCALE GENOMIC DNA]</scope>
    <source>
        <strain>ATCC BAA-895 / CDC 4225-83 / SGSC4696</strain>
    </source>
</reference>
<organism>
    <name type="scientific">Citrobacter koseri (strain ATCC BAA-895 / CDC 4225-83 / SGSC4696)</name>
    <dbReference type="NCBI Taxonomy" id="290338"/>
    <lineage>
        <taxon>Bacteria</taxon>
        <taxon>Pseudomonadati</taxon>
        <taxon>Pseudomonadota</taxon>
        <taxon>Gammaproteobacteria</taxon>
        <taxon>Enterobacterales</taxon>
        <taxon>Enterobacteriaceae</taxon>
        <taxon>Citrobacter</taxon>
    </lineage>
</organism>